<evidence type="ECO:0000250" key="1"/>
<evidence type="ECO:0000250" key="2">
    <source>
        <dbReference type="UniProtKB" id="P03420"/>
    </source>
</evidence>
<evidence type="ECO:0000250" key="3">
    <source>
        <dbReference type="UniProtKB" id="P11209"/>
    </source>
</evidence>
<evidence type="ECO:0000255" key="4"/>
<evidence type="ECO:0000256" key="5">
    <source>
        <dbReference type="SAM" id="MobiDB-lite"/>
    </source>
</evidence>
<evidence type="ECO:0000269" key="6">
    <source>
    </source>
</evidence>
<evidence type="ECO:0000269" key="7">
    <source>
    </source>
</evidence>
<evidence type="ECO:0000305" key="8"/>
<evidence type="ECO:0007829" key="9">
    <source>
        <dbReference type="PDB" id="7UR4"/>
    </source>
</evidence>
<evidence type="ECO:0007829" key="10">
    <source>
        <dbReference type="PDB" id="8VT3"/>
    </source>
</evidence>
<organism>
    <name type="scientific">Human metapneumovirus (strain CAN97-83)</name>
    <name type="common">HMPV</name>
    <dbReference type="NCBI Taxonomy" id="694067"/>
    <lineage>
        <taxon>Viruses</taxon>
        <taxon>Riboviria</taxon>
        <taxon>Orthornavirae</taxon>
        <taxon>Negarnaviricota</taxon>
        <taxon>Haploviricotina</taxon>
        <taxon>Monjiviricetes</taxon>
        <taxon>Mononegavirales</taxon>
        <taxon>Pneumoviridae</taxon>
        <taxon>Metapneumovirus</taxon>
        <taxon>Metapneumovirus hominis</taxon>
    </lineage>
</organism>
<reference key="1">
    <citation type="journal article" date="2003" name="Virology">
        <title>Genetic diversity between human metapneumovirus subgroups.</title>
        <authorList>
            <person name="Biacchesi S."/>
            <person name="Skiadopoulos M.H."/>
            <person name="Boivin G."/>
            <person name="Hanson C.T."/>
            <person name="Murphy B.R."/>
            <person name="Collins P.L."/>
            <person name="Buchholz U.J."/>
        </authorList>
    </citation>
    <scope>NUCLEOTIDE SEQUENCE [GENOMIC RNA]</scope>
</reference>
<reference key="2">
    <citation type="journal article" date="2005" name="J. Virol.">
        <title>Chimeric recombinant human metapneumoviruses with the nucleoprotein or phosphoprotein open reading frame replaced by that of avian metapneumovirus exhibit improved growth in vitro and attenuation in vivo.</title>
        <authorList>
            <person name="Pham Q.N."/>
            <person name="Biacchesi S."/>
            <person name="Skiadopoulos M.H."/>
            <person name="Murphy B.R."/>
            <person name="Collins P.L."/>
            <person name="Buchholz U.J."/>
        </authorList>
    </citation>
    <scope>NUCLEOTIDE SEQUENCE [GENOMIC RNA]</scope>
</reference>
<reference key="3">
    <citation type="journal article" date="2009" name="Proc. Natl. Acad. Sci. U.S.A.">
        <title>Integrin alphavbeta1 promotes infection by human metapneumovirus.</title>
        <authorList>
            <person name="Cseke G."/>
            <person name="Maginnis M.S."/>
            <person name="Cox R.G."/>
            <person name="Tollefson S.J."/>
            <person name="Podsiad A.B."/>
            <person name="Wright D.W."/>
            <person name="Dermody T.S."/>
            <person name="Williams J.V."/>
        </authorList>
    </citation>
    <scope>INTERACTION WITH HOST ITGAV/ITGB1 INTEGRIN</scope>
</reference>
<reference key="4">
    <citation type="journal article" date="2012" name="J. Virol.">
        <title>Human metapneumovirus (HMPV) binding and infection are mediated by interactions between the HMPV fusion protein and heparan sulfate.</title>
        <authorList>
            <person name="Chang A."/>
            <person name="Masante C."/>
            <person name="Buchholz U.J."/>
            <person name="Dutch R.E."/>
        </authorList>
    </citation>
    <scope>FUNCTION</scope>
</reference>
<organismHost>
    <name type="scientific">Homo sapiens</name>
    <name type="common">Human</name>
    <dbReference type="NCBI Taxonomy" id="9606"/>
</organismHost>
<feature type="signal peptide" evidence="4">
    <location>
        <begin position="1"/>
        <end position="18"/>
    </location>
</feature>
<feature type="chain" id="PRO_0000394806" description="Fusion glycoprotein F0">
    <location>
        <begin position="19"/>
        <end position="539"/>
    </location>
</feature>
<feature type="chain" id="PRO_0000394807" description="Fusion glycoprotein F2">
    <location>
        <begin position="20"/>
        <end position="102"/>
    </location>
</feature>
<feature type="chain" id="PRO_0000394808" description="Fusion glycoprotein F1">
    <location>
        <begin position="103"/>
        <end position="539"/>
    </location>
</feature>
<feature type="transmembrane region" description="Helical" evidence="4">
    <location>
        <begin position="492"/>
        <end position="512"/>
    </location>
</feature>
<feature type="region of interest" description="Fusion peptide" evidence="3">
    <location>
        <begin position="103"/>
        <end position="127"/>
    </location>
</feature>
<feature type="region of interest" description="Disordered" evidence="5">
    <location>
        <begin position="520"/>
        <end position="539"/>
    </location>
</feature>
<feature type="short sequence motif" description="Cell attachment site" evidence="4">
    <location>
        <begin position="329"/>
        <end position="331"/>
    </location>
</feature>
<feature type="compositionally biased region" description="Polar residues" evidence="5">
    <location>
        <begin position="529"/>
        <end position="539"/>
    </location>
</feature>
<feature type="glycosylation site" description="N-linked (GlcNAc...) asparagine; by host" evidence="4">
    <location>
        <position position="57"/>
    </location>
</feature>
<feature type="glycosylation site" description="N-linked (GlcNAc...) asparagine; by host" evidence="4">
    <location>
        <position position="172"/>
    </location>
</feature>
<feature type="glycosylation site" description="N-linked (GlcNAc...) asparagine; by host" evidence="4">
    <location>
        <position position="353"/>
    </location>
</feature>
<feature type="disulfide bond" description="Interchain (between F2 and F1 chains)" evidence="2">
    <location>
        <begin position="28"/>
        <end position="407"/>
    </location>
</feature>
<feature type="disulfide bond" description="Interchain (between F2 and F1 chains)" evidence="2">
    <location>
        <begin position="60"/>
        <end position="182"/>
    </location>
</feature>
<feature type="disulfide bond" evidence="2">
    <location>
        <begin position="283"/>
        <end position="311"/>
    </location>
</feature>
<feature type="disulfide bond" evidence="2">
    <location>
        <begin position="292"/>
        <end position="301"/>
    </location>
</feature>
<feature type="disulfide bond" evidence="2">
    <location>
        <begin position="326"/>
        <end position="335"/>
    </location>
</feature>
<feature type="disulfide bond" evidence="2">
    <location>
        <begin position="350"/>
        <end position="361"/>
    </location>
</feature>
<feature type="disulfide bond" evidence="2">
    <location>
        <begin position="384"/>
        <end position="390"/>
    </location>
</feature>
<feature type="strand" evidence="10">
    <location>
        <begin position="20"/>
        <end position="24"/>
    </location>
</feature>
<feature type="turn" evidence="10">
    <location>
        <begin position="25"/>
        <end position="28"/>
    </location>
</feature>
<feature type="strand" evidence="10">
    <location>
        <begin position="29"/>
        <end position="40"/>
    </location>
</feature>
<feature type="strand" evidence="10">
    <location>
        <begin position="43"/>
        <end position="51"/>
    </location>
</feature>
<feature type="turn" evidence="9">
    <location>
        <begin position="55"/>
        <end position="57"/>
    </location>
</feature>
<feature type="strand" evidence="9">
    <location>
        <begin position="62"/>
        <end position="64"/>
    </location>
</feature>
<feature type="helix" evidence="10">
    <location>
        <begin position="66"/>
        <end position="80"/>
    </location>
</feature>
<feature type="helix" evidence="10">
    <location>
        <begin position="81"/>
        <end position="83"/>
    </location>
</feature>
<feature type="strand" evidence="10">
    <location>
        <begin position="86"/>
        <end position="88"/>
    </location>
</feature>
<feature type="helix" evidence="10">
    <location>
        <begin position="105"/>
        <end position="108"/>
    </location>
</feature>
<feature type="strand" evidence="10">
    <location>
        <begin position="109"/>
        <end position="111"/>
    </location>
</feature>
<feature type="helix" evidence="10">
    <location>
        <begin position="112"/>
        <end position="128"/>
    </location>
</feature>
<feature type="helix" evidence="10">
    <location>
        <begin position="131"/>
        <end position="137"/>
    </location>
</feature>
<feature type="turn" evidence="10">
    <location>
        <begin position="138"/>
        <end position="143"/>
    </location>
</feature>
<feature type="strand" evidence="10">
    <location>
        <begin position="144"/>
        <end position="150"/>
    </location>
</feature>
<feature type="strand" evidence="10">
    <location>
        <begin position="156"/>
        <end position="160"/>
    </location>
</feature>
<feature type="helix" evidence="10">
    <location>
        <begin position="164"/>
        <end position="171"/>
    </location>
</feature>
<feature type="turn" evidence="10">
    <location>
        <begin position="172"/>
        <end position="175"/>
    </location>
</feature>
<feature type="strand" evidence="10">
    <location>
        <begin position="178"/>
        <end position="180"/>
    </location>
</feature>
<feature type="helix" evidence="10">
    <location>
        <begin position="189"/>
        <end position="196"/>
    </location>
</feature>
<feature type="turn" evidence="10">
    <location>
        <begin position="197"/>
        <end position="199"/>
    </location>
</feature>
<feature type="helix" evidence="10">
    <location>
        <begin position="200"/>
        <end position="209"/>
    </location>
</feature>
<feature type="strand" evidence="10">
    <location>
        <begin position="213"/>
        <end position="216"/>
    </location>
</feature>
<feature type="turn" evidence="10">
    <location>
        <begin position="219"/>
        <end position="221"/>
    </location>
</feature>
<feature type="turn" evidence="10">
    <location>
        <begin position="225"/>
        <end position="230"/>
    </location>
</feature>
<feature type="helix" evidence="10">
    <location>
        <begin position="231"/>
        <end position="233"/>
    </location>
</feature>
<feature type="strand" evidence="10">
    <location>
        <begin position="234"/>
        <end position="236"/>
    </location>
</feature>
<feature type="helix" evidence="10">
    <location>
        <begin position="238"/>
        <end position="245"/>
    </location>
</feature>
<feature type="helix" evidence="10">
    <location>
        <begin position="248"/>
        <end position="250"/>
    </location>
</feature>
<feature type="helix" evidence="10">
    <location>
        <begin position="252"/>
        <end position="254"/>
    </location>
</feature>
<feature type="strand" evidence="10">
    <location>
        <begin position="256"/>
        <end position="262"/>
    </location>
</feature>
<feature type="strand" evidence="10">
    <location>
        <begin position="264"/>
        <end position="274"/>
    </location>
</feature>
<feature type="strand" evidence="10">
    <location>
        <begin position="278"/>
        <end position="288"/>
    </location>
</feature>
<feature type="strand" evidence="9">
    <location>
        <begin position="291"/>
        <end position="295"/>
    </location>
</feature>
<feature type="strand" evidence="9">
    <location>
        <begin position="298"/>
        <end position="305"/>
    </location>
</feature>
<feature type="strand" evidence="10">
    <location>
        <begin position="308"/>
        <end position="311"/>
    </location>
</feature>
<feature type="strand" evidence="10">
    <location>
        <begin position="318"/>
        <end position="320"/>
    </location>
</feature>
<feature type="strand" evidence="9">
    <location>
        <begin position="323"/>
        <end position="329"/>
    </location>
</feature>
<feature type="strand" evidence="9">
    <location>
        <begin position="332"/>
        <end position="336"/>
    </location>
</feature>
<feature type="helix" evidence="9">
    <location>
        <begin position="337"/>
        <end position="339"/>
    </location>
</feature>
<feature type="strand" evidence="9">
    <location>
        <begin position="341"/>
        <end position="343"/>
    </location>
</feature>
<feature type="helix" evidence="10">
    <location>
        <begin position="345"/>
        <end position="351"/>
    </location>
</feature>
<feature type="strand" evidence="10">
    <location>
        <begin position="354"/>
        <end position="356"/>
    </location>
</feature>
<feature type="strand" evidence="9">
    <location>
        <begin position="362"/>
        <end position="368"/>
    </location>
</feature>
<feature type="strand" evidence="10">
    <location>
        <begin position="372"/>
        <end position="376"/>
    </location>
</feature>
<feature type="strand" evidence="10">
    <location>
        <begin position="379"/>
        <end position="384"/>
    </location>
</feature>
<feature type="strand" evidence="10">
    <location>
        <begin position="390"/>
        <end position="394"/>
    </location>
</feature>
<feature type="turn" evidence="10">
    <location>
        <begin position="395"/>
        <end position="397"/>
    </location>
</feature>
<feature type="strand" evidence="10">
    <location>
        <begin position="398"/>
        <end position="402"/>
    </location>
</feature>
<feature type="strand" evidence="10">
    <location>
        <begin position="405"/>
        <end position="411"/>
    </location>
</feature>
<feature type="turn" evidence="10">
    <location>
        <begin position="412"/>
        <end position="414"/>
    </location>
</feature>
<feature type="strand" evidence="10">
    <location>
        <begin position="416"/>
        <end position="420"/>
    </location>
</feature>
<feature type="strand" evidence="10">
    <location>
        <begin position="423"/>
        <end position="426"/>
    </location>
</feature>
<feature type="strand" evidence="10">
    <location>
        <begin position="434"/>
        <end position="437"/>
    </location>
</feature>
<feature type="helix" evidence="10">
    <location>
        <begin position="442"/>
        <end position="445"/>
    </location>
</feature>
<feature type="strand" evidence="9">
    <location>
        <begin position="450"/>
        <end position="452"/>
    </location>
</feature>
<feature type="strand" evidence="10">
    <location>
        <begin position="456"/>
        <end position="459"/>
    </location>
</feature>
<feature type="helix" evidence="10">
    <location>
        <begin position="460"/>
        <end position="485"/>
    </location>
</feature>
<proteinExistence type="evidence at protein level"/>
<keyword id="KW-0002">3D-structure</keyword>
<keyword id="KW-0165">Cleavage on pair of basic residues</keyword>
<keyword id="KW-1015">Disulfide bond</keyword>
<keyword id="KW-1169">Fusion of virus membrane with host cell membrane</keyword>
<keyword id="KW-1168">Fusion of virus membrane with host membrane</keyword>
<keyword id="KW-0325">Glycoprotein</keyword>
<keyword id="KW-1032">Host cell membrane</keyword>
<keyword id="KW-1043">Host membrane</keyword>
<keyword id="KW-0472">Membrane</keyword>
<keyword id="KW-1185">Reference proteome</keyword>
<keyword id="KW-0732">Signal</keyword>
<keyword id="KW-0812">Transmembrane</keyword>
<keyword id="KW-1133">Transmembrane helix</keyword>
<keyword id="KW-0261">Viral envelope protein</keyword>
<keyword id="KW-1162">Viral penetration into host cytoplasm</keyword>
<keyword id="KW-0946">Virion</keyword>
<keyword id="KW-1160">Virus entry into host cell</keyword>
<comment type="function">
    <molecule>Fusion glycoprotein F0</molecule>
    <text evidence="2">Inactive precursor that is cleaved to give rise to the mature F1 and F2 fusion glycoproteins.</text>
</comment>
<comment type="function">
    <molecule>Fusion glycoprotein F1</molecule>
    <text evidence="2">Class I viral fusion protein. Under the current model, the protein has at least 3 conformational states: pre-fusion native state, pre-hairpin intermediate state, and post-fusion hairpin state. During viral and plasma cell membrane fusion, the coiled coil regions assume a trimer-of-hairpins structure, positioning the fusion peptide in close proximity to the C-terminal region of the ectodomain. The formation of this structure appears to drive apposition and subsequent fusion of viral and cellular membranes leading to delivery of the nucleocapsid into the cytoplasm. This fusion is pH independent and occurs at the plasma or endosomal membrane. The trimer of F1-F2 (F protein) also facilitates the attachment to host cell by binding to host heparan sulfate.</text>
</comment>
<comment type="function">
    <molecule>Fusion glycoprotein F2</molecule>
    <text evidence="2 7">Major determinant of the species specificity of RSV infection (By similarity). The trimer of F1-F2 (F protein) also facilitates the attachment to host cell by binding to host heparan sulfate (PubMed:22238303).</text>
</comment>
<comment type="subunit">
    <molecule>Fusion glycoprotein F1</molecule>
    <text evidence="2 6 7">Homotrimer. Heterodimer with fusion protein F2; disulfide-linked. As a heterodimer with F2, interacts with host heparan sulfate (PubMed:22238303). As a heterodimer with F2, interacts with host integrin ITGAV/ITGB1 (PubMed:19164533). Part of a complex composed of F1, F2 and G glycoproteins (By similarity).</text>
</comment>
<comment type="subunit">
    <molecule>Fusion glycoprotein F2</molecule>
    <text evidence="2 6 7">Homotrimer. Heterodimer with fusion protein F1; disulfide-linked. As a heterodimer with F1, interacts with host heparan sulfate (PubMed:22238303). As a heterodimer with F2, interacts with host integrin ITGAV/ITGB1 (PubMed:19164533). Part of a complex composed of F1, F2 and G glycoproteins (By similarity).</text>
</comment>
<comment type="subcellular location">
    <subcellularLocation>
        <location>Virion membrane</location>
        <topology>Single-pass type I membrane protein</topology>
    </subcellularLocation>
    <subcellularLocation>
        <location evidence="1">Host cell membrane</location>
        <topology evidence="1">Single-pass membrane protein</topology>
    </subcellularLocation>
</comment>
<comment type="domain">
    <molecule>Fusion glycoprotein F0</molecule>
    <text evidence="2 3">The N-terminus is a hydrophobic fusion peptide that inserts into the target host membrane (By similarity). It is buried in the center of the trimer cavity before cleavage. The coiled coil (heptad repeat) regions are probably involved in homotrimerization, heterodimerization and in the formation of a fusion-active hairpin structure (By similarity).</text>
</comment>
<comment type="domain">
    <molecule>Fusion glycoprotein F1</molecule>
    <text evidence="2 3">The N-terminus is a hydrophobic fusion peptide that inserts into the target host membrane (By similarity). It is buried in the center of the trimer cavity before cleavage. The coiled coil (heptad repeat) regions are probably involved in homotrimerization, heterodimerization and in the formation of a fusion-active hairpin structure (By similarity).</text>
</comment>
<comment type="PTM">
    <molecule>Fusion glycoprotein F0</molecule>
    <text evidence="2">The F glycoprotein is synthesized as a F0 inactive precursor that is heavily N-glycosylated and processed.</text>
</comment>
<comment type="miscellaneous">
    <text evidence="8">The cleavage peptide sequence for the hMPV F protein (RQSR) varies from the one described for other pneumoviruses, and differs from the furin protease motif (R/K-X-R/K-R).</text>
</comment>
<comment type="similarity">
    <text evidence="8">Belongs to the paramyxoviruses fusion glycoprotein family.</text>
</comment>
<dbReference type="EMBL" id="AY297749">
    <property type="protein sequence ID" value="AAQ67695.1"/>
    <property type="molecule type" value="Genomic_RNA"/>
</dbReference>
<dbReference type="RefSeq" id="YP_012608.1">
    <property type="nucleotide sequence ID" value="NC_004148.2"/>
</dbReference>
<dbReference type="PDB" id="7UR4">
    <property type="method" value="EM"/>
    <property type="resolution" value="3.34 A"/>
    <property type="chains" value="A/B/C=1-490"/>
</dbReference>
<dbReference type="PDB" id="8VT2">
    <property type="method" value="EM"/>
    <property type="resolution" value="3.14 A"/>
    <property type="chains" value="A/B/C=1-490"/>
</dbReference>
<dbReference type="PDB" id="8VT3">
    <property type="method" value="EM"/>
    <property type="resolution" value="3.33 A"/>
    <property type="chains" value="A/B/C=18-92, G/H/I=103-487"/>
</dbReference>
<dbReference type="PDBsum" id="7UR4"/>
<dbReference type="PDBsum" id="8VT2"/>
<dbReference type="PDBsum" id="8VT3"/>
<dbReference type="EMDB" id="EMD-43517"/>
<dbReference type="SMR" id="Q6WB98"/>
<dbReference type="GlyCosmos" id="Q6WB98">
    <property type="glycosylation" value="3 sites, No reported glycans"/>
</dbReference>
<dbReference type="ABCD" id="Q6WB98">
    <property type="antibodies" value="1 sequenced antibody"/>
</dbReference>
<dbReference type="Proteomes" id="UP000001398">
    <property type="component" value="Segment"/>
</dbReference>
<dbReference type="GO" id="GO:0020002">
    <property type="term" value="C:host cell plasma membrane"/>
    <property type="evidence" value="ECO:0007669"/>
    <property type="project" value="UniProtKB-SubCell"/>
</dbReference>
<dbReference type="GO" id="GO:0016020">
    <property type="term" value="C:membrane"/>
    <property type="evidence" value="ECO:0007669"/>
    <property type="project" value="UniProtKB-KW"/>
</dbReference>
<dbReference type="GO" id="GO:0019031">
    <property type="term" value="C:viral envelope"/>
    <property type="evidence" value="ECO:0007669"/>
    <property type="project" value="UniProtKB-KW"/>
</dbReference>
<dbReference type="GO" id="GO:0055036">
    <property type="term" value="C:virion membrane"/>
    <property type="evidence" value="ECO:0007669"/>
    <property type="project" value="UniProtKB-SubCell"/>
</dbReference>
<dbReference type="GO" id="GO:0019064">
    <property type="term" value="P:fusion of virus membrane with host plasma membrane"/>
    <property type="evidence" value="ECO:0007669"/>
    <property type="project" value="UniProtKB-KW"/>
</dbReference>
<dbReference type="GO" id="GO:0046718">
    <property type="term" value="P:symbiont entry into host cell"/>
    <property type="evidence" value="ECO:0007669"/>
    <property type="project" value="UniProtKB-KW"/>
</dbReference>
<dbReference type="Gene3D" id="1.10.287.2480">
    <property type="match status" value="2"/>
</dbReference>
<dbReference type="InterPro" id="IPR000776">
    <property type="entry name" value="Fusion_F0_Paramyxovir"/>
</dbReference>
<dbReference type="Pfam" id="PF00523">
    <property type="entry name" value="Fusion_gly"/>
    <property type="match status" value="1"/>
</dbReference>
<dbReference type="SUPFAM" id="SSF58069">
    <property type="entry name" value="Virus ectodomain"/>
    <property type="match status" value="2"/>
</dbReference>
<gene>
    <name type="primary">F</name>
</gene>
<protein>
    <recommendedName>
        <fullName>Fusion glycoprotein F0</fullName>
        <shortName>Protein F</shortName>
    </recommendedName>
    <component>
        <recommendedName>
            <fullName>Fusion glycoprotein F2</fullName>
        </recommendedName>
    </component>
    <component>
        <recommendedName>
            <fullName>Fusion glycoprotein F1</fullName>
        </recommendedName>
    </component>
</protein>
<name>FUS_HMPVC</name>
<accession>Q6WB98</accession>
<sequence length="539" mass="58477">MSWKVVIIFSLLITPQHGLKESYLEESCSTITEGYLSVLRTGWYTNVFTLEVGDVENLTCSDGPSLIKTELDLTKSALRELKTVSADQLAREEQIENPRQSRFVLGAIALGVATAAAVTAGVAIAKTIRLESEVTAIKNALKTTNEAVSTLGNGVRVLATAVRELKDFVSKNLTRAINKNKCDIDDLKMAVSFSQFNRRFLNVVRQFSDNAGITPAISLDLMTDAELARAVSNMPTSAGQIKLMLENRAMVRRKGFGILIGVYGSSVIYMVQLPIFGVIDTPCWIVKAAPSCSGKKGNYACLLREDQGWYCQNAGSTVYYPNEKDCETRGDHVFCDTAAGINVAEQSKECNINISTTNYPCKVSTGRHPISMVALSPLGALVACYKGVSCSIGSNRVGIIKQLNKGCSYITNQDADTVTIDNTVYQLSKVEGEQHVIKGRPVSSSFDPIKFPEDQFNVALDQVFENIENSQALVDQSNRILSSAEKGNTGFIIVIILIAVLGSSMILVSIFIIIKKTKKPTGAPPELSGVTNNGFIPHS</sequence>